<gene>
    <name evidence="1" type="primary">rpoB</name>
    <name type="ordered locus">Mpe_A3451</name>
</gene>
<protein>
    <recommendedName>
        <fullName evidence="1">DNA-directed RNA polymerase subunit beta</fullName>
        <shortName evidence="1">RNAP subunit beta</shortName>
        <ecNumber evidence="1">2.7.7.6</ecNumber>
    </recommendedName>
    <alternativeName>
        <fullName evidence="1">RNA polymerase subunit beta</fullName>
    </alternativeName>
    <alternativeName>
        <fullName evidence="1">Transcriptase subunit beta</fullName>
    </alternativeName>
</protein>
<keyword id="KW-0240">DNA-directed RNA polymerase</keyword>
<keyword id="KW-0548">Nucleotidyltransferase</keyword>
<keyword id="KW-1185">Reference proteome</keyword>
<keyword id="KW-0804">Transcription</keyword>
<keyword id="KW-0808">Transferase</keyword>
<sequence>MAQATPYSYTERKRIRKSFGKRENVLGVPYLLTMQKDSYVAFLQKDVPPQKRKPEGLQAAFLSAFPIVSHNGFVEMKYIEFNMAKPAFDTRECQQRGLTYAAAVRAKLQMIIYDRETSTSQSKVVKEIKEQEVYMGEVPLMTDYGSFIVNGTERVIVSQLHRSPGVFFEHDKGKTHSSGKLLFSARIIPYRGSWLDFEFDPKDILYFRVDRRRKMPVTILLKAIGLNPEQILANFFVFDNFRLMDSGAQMEFVADRLRGEIARFDLTDKAGAVIVEKDKRITARHTRALEASGTSFISVPEDFLVGRVLAKNMVDADTGEIIAKANDELTDSLLKKLRTAGIKDIQCLYTNELDMGAYISQTLASDETADELAARVAIYRMMRPGEPPTEDAVQALFNRLFYSEDTYDLSRVGRMKFNARVGRDTAEGRMVLANDDILDVVKILVELRNGRGEVDDIDHLGNRRVRCVGELAENQYRSGLARIEKAVKERLGQAETEALMPHDLINSKPISAALKEFFGASQLSQFMDQTNPLSEITHKRRVSALGPGGLTRERAGFEVRDVHPTHYGRVCPIETPEGPNIGLINSLALYAQLNEYGFLETPYRRVIDSKVTDQIDYLSAIEEGKYVIAQANAGLDKDGKLIDELVSARESGESVLTSPERIQYMDVAPTQIVSVAASLVPFLEHDDANRALMGANMQRQAVPVLRPEKAFVGTGVERVSAVDSGTVVTAKRGGVVDYIDTNRIVIRVNDAETVAGEVGVDIYNLIKYQRSNQNTNIHQRPIVQRGDQVGAGDVIADGASTDIGELALGQNMLVAFMPWNGYNFEDSILISERVVADDRYTSIHIEELVVMARDTKLGSEEITRDIPNLSEQQLGRLDESGIVYIGAEVNPGDVLVGKVTPKGETTLTPEEKLLRAIFGEKASDVKDTSLRVDQGTNGTVIDVQVFTREGIQRDKRAQQIIDDELKRFRLDLNDQLRIVEADAFDRIEKLLAGKTANGGPNKLAKGTPIDKAYLASVDKYHWFDIRPADDDIANQLESIKNSLEQTRHSFDLAFEEKRKKLTQGDELPAGVLKMVKVYLAVKRRLQPGDKMAGRHGNKGVVSKIVPVEDMPYMADGTPCDIVLNPLGVPSRMNVGQVLEVHLGWAAKGIGQRIGDLLQQEAKIADVRKFLDELYNKSGGKSEGLNGLSDAEITEMATNLAQGVPFATPVFDGATEEEIRAMMHLAYPDEIAAAKGLNATRTQATLHDGRTGDAFERPVTVGYMHVLKLHHLVDDKMHARSTGPYSLVTQQPLGGKAQFGGQRFGEMEVWALEAYGASYVLQEMLTVKSDDVNGRTKVYESIVKGEHAIEAGMPESFNVLVKEIRSLGIDIELERN</sequence>
<comment type="function">
    <text evidence="1">DNA-dependent RNA polymerase catalyzes the transcription of DNA into RNA using the four ribonucleoside triphosphates as substrates.</text>
</comment>
<comment type="catalytic activity">
    <reaction evidence="1">
        <text>RNA(n) + a ribonucleoside 5'-triphosphate = RNA(n+1) + diphosphate</text>
        <dbReference type="Rhea" id="RHEA:21248"/>
        <dbReference type="Rhea" id="RHEA-COMP:14527"/>
        <dbReference type="Rhea" id="RHEA-COMP:17342"/>
        <dbReference type="ChEBI" id="CHEBI:33019"/>
        <dbReference type="ChEBI" id="CHEBI:61557"/>
        <dbReference type="ChEBI" id="CHEBI:140395"/>
        <dbReference type="EC" id="2.7.7.6"/>
    </reaction>
</comment>
<comment type="subunit">
    <text evidence="1">The RNAP catalytic core consists of 2 alpha, 1 beta, 1 beta' and 1 omega subunit. When a sigma factor is associated with the core the holoenzyme is formed, which can initiate transcription.</text>
</comment>
<comment type="similarity">
    <text evidence="1">Belongs to the RNA polymerase beta chain family.</text>
</comment>
<feature type="chain" id="PRO_0000300346" description="DNA-directed RNA polymerase subunit beta">
    <location>
        <begin position="1"/>
        <end position="1375"/>
    </location>
</feature>
<evidence type="ECO:0000255" key="1">
    <source>
        <dbReference type="HAMAP-Rule" id="MF_01321"/>
    </source>
</evidence>
<reference key="1">
    <citation type="journal article" date="2007" name="J. Bacteriol.">
        <title>Whole-genome analysis of the methyl tert-butyl ether-degrading beta-proteobacterium Methylibium petroleiphilum PM1.</title>
        <authorList>
            <person name="Kane S.R."/>
            <person name="Chakicherla A.Y."/>
            <person name="Chain P.S.G."/>
            <person name="Schmidt R."/>
            <person name="Shin M.W."/>
            <person name="Legler T.C."/>
            <person name="Scow K.M."/>
            <person name="Larimer F.W."/>
            <person name="Lucas S.M."/>
            <person name="Richardson P.M."/>
            <person name="Hristova K.R."/>
        </authorList>
    </citation>
    <scope>NUCLEOTIDE SEQUENCE [LARGE SCALE GENOMIC DNA]</scope>
    <source>
        <strain>ATCC BAA-1232 / LMG 22953 / PM1</strain>
    </source>
</reference>
<accession>A2SLG5</accession>
<dbReference type="EC" id="2.7.7.6" evidence="1"/>
<dbReference type="EMBL" id="CP000555">
    <property type="protein sequence ID" value="ABM96404.1"/>
    <property type="molecule type" value="Genomic_DNA"/>
</dbReference>
<dbReference type="RefSeq" id="WP_011831025.1">
    <property type="nucleotide sequence ID" value="NC_008825.1"/>
</dbReference>
<dbReference type="SMR" id="A2SLG5"/>
<dbReference type="STRING" id="420662.Mpe_A3451"/>
<dbReference type="KEGG" id="mpt:Mpe_A3451"/>
<dbReference type="eggNOG" id="COG0085">
    <property type="taxonomic scope" value="Bacteria"/>
</dbReference>
<dbReference type="HOGENOM" id="CLU_000524_4_0_4"/>
<dbReference type="Proteomes" id="UP000000366">
    <property type="component" value="Chromosome"/>
</dbReference>
<dbReference type="GO" id="GO:0000428">
    <property type="term" value="C:DNA-directed RNA polymerase complex"/>
    <property type="evidence" value="ECO:0007669"/>
    <property type="project" value="UniProtKB-KW"/>
</dbReference>
<dbReference type="GO" id="GO:0003677">
    <property type="term" value="F:DNA binding"/>
    <property type="evidence" value="ECO:0007669"/>
    <property type="project" value="UniProtKB-UniRule"/>
</dbReference>
<dbReference type="GO" id="GO:0003899">
    <property type="term" value="F:DNA-directed RNA polymerase activity"/>
    <property type="evidence" value="ECO:0007669"/>
    <property type="project" value="UniProtKB-UniRule"/>
</dbReference>
<dbReference type="GO" id="GO:0032549">
    <property type="term" value="F:ribonucleoside binding"/>
    <property type="evidence" value="ECO:0007669"/>
    <property type="project" value="InterPro"/>
</dbReference>
<dbReference type="GO" id="GO:0006351">
    <property type="term" value="P:DNA-templated transcription"/>
    <property type="evidence" value="ECO:0007669"/>
    <property type="project" value="UniProtKB-UniRule"/>
</dbReference>
<dbReference type="CDD" id="cd00653">
    <property type="entry name" value="RNA_pol_B_RPB2"/>
    <property type="match status" value="1"/>
</dbReference>
<dbReference type="FunFam" id="2.40.50.100:FF:000006">
    <property type="entry name" value="DNA-directed RNA polymerase subunit beta"/>
    <property type="match status" value="1"/>
</dbReference>
<dbReference type="FunFam" id="3.90.1800.10:FF:000001">
    <property type="entry name" value="DNA-directed RNA polymerase subunit beta"/>
    <property type="match status" value="1"/>
</dbReference>
<dbReference type="Gene3D" id="2.40.50.100">
    <property type="match status" value="1"/>
</dbReference>
<dbReference type="Gene3D" id="2.40.50.150">
    <property type="match status" value="1"/>
</dbReference>
<dbReference type="Gene3D" id="3.90.1100.10">
    <property type="match status" value="2"/>
</dbReference>
<dbReference type="Gene3D" id="2.30.150.10">
    <property type="entry name" value="DNA-directed RNA polymerase, beta subunit, external 1 domain"/>
    <property type="match status" value="1"/>
</dbReference>
<dbReference type="Gene3D" id="2.40.270.10">
    <property type="entry name" value="DNA-directed RNA polymerase, subunit 2, domain 6"/>
    <property type="match status" value="2"/>
</dbReference>
<dbReference type="Gene3D" id="3.90.1800.10">
    <property type="entry name" value="RNA polymerase alpha subunit dimerisation domain"/>
    <property type="match status" value="1"/>
</dbReference>
<dbReference type="Gene3D" id="3.90.1110.10">
    <property type="entry name" value="RNA polymerase Rpb2, domain 2"/>
    <property type="match status" value="2"/>
</dbReference>
<dbReference type="HAMAP" id="MF_01321">
    <property type="entry name" value="RNApol_bact_RpoB"/>
    <property type="match status" value="1"/>
</dbReference>
<dbReference type="InterPro" id="IPR042107">
    <property type="entry name" value="DNA-dir_RNA_pol_bsu_ext_1_sf"/>
</dbReference>
<dbReference type="InterPro" id="IPR019462">
    <property type="entry name" value="DNA-dir_RNA_pol_bsu_external_1"/>
</dbReference>
<dbReference type="InterPro" id="IPR015712">
    <property type="entry name" value="DNA-dir_RNA_pol_su2"/>
</dbReference>
<dbReference type="InterPro" id="IPR007120">
    <property type="entry name" value="DNA-dir_RNAP_su2_dom"/>
</dbReference>
<dbReference type="InterPro" id="IPR037033">
    <property type="entry name" value="DNA-dir_RNAP_su2_hyb_sf"/>
</dbReference>
<dbReference type="InterPro" id="IPR010243">
    <property type="entry name" value="RNA_pol_bsu_bac"/>
</dbReference>
<dbReference type="InterPro" id="IPR007121">
    <property type="entry name" value="RNA_pol_bsu_CS"/>
</dbReference>
<dbReference type="InterPro" id="IPR007644">
    <property type="entry name" value="RNA_pol_bsu_protrusion"/>
</dbReference>
<dbReference type="InterPro" id="IPR007642">
    <property type="entry name" value="RNA_pol_Rpb2_2"/>
</dbReference>
<dbReference type="InterPro" id="IPR037034">
    <property type="entry name" value="RNA_pol_Rpb2_2_sf"/>
</dbReference>
<dbReference type="InterPro" id="IPR007645">
    <property type="entry name" value="RNA_pol_Rpb2_3"/>
</dbReference>
<dbReference type="InterPro" id="IPR007641">
    <property type="entry name" value="RNA_pol_Rpb2_7"/>
</dbReference>
<dbReference type="InterPro" id="IPR014724">
    <property type="entry name" value="RNA_pol_RPB2_OB-fold"/>
</dbReference>
<dbReference type="NCBIfam" id="NF001616">
    <property type="entry name" value="PRK00405.1"/>
    <property type="match status" value="1"/>
</dbReference>
<dbReference type="NCBIfam" id="TIGR02013">
    <property type="entry name" value="rpoB"/>
    <property type="match status" value="1"/>
</dbReference>
<dbReference type="PANTHER" id="PTHR20856">
    <property type="entry name" value="DNA-DIRECTED RNA POLYMERASE I SUBUNIT 2"/>
    <property type="match status" value="1"/>
</dbReference>
<dbReference type="Pfam" id="PF04563">
    <property type="entry name" value="RNA_pol_Rpb2_1"/>
    <property type="match status" value="1"/>
</dbReference>
<dbReference type="Pfam" id="PF04561">
    <property type="entry name" value="RNA_pol_Rpb2_2"/>
    <property type="match status" value="2"/>
</dbReference>
<dbReference type="Pfam" id="PF04565">
    <property type="entry name" value="RNA_pol_Rpb2_3"/>
    <property type="match status" value="1"/>
</dbReference>
<dbReference type="Pfam" id="PF10385">
    <property type="entry name" value="RNA_pol_Rpb2_45"/>
    <property type="match status" value="1"/>
</dbReference>
<dbReference type="Pfam" id="PF00562">
    <property type="entry name" value="RNA_pol_Rpb2_6"/>
    <property type="match status" value="1"/>
</dbReference>
<dbReference type="Pfam" id="PF04560">
    <property type="entry name" value="RNA_pol_Rpb2_7"/>
    <property type="match status" value="1"/>
</dbReference>
<dbReference type="SUPFAM" id="SSF64484">
    <property type="entry name" value="beta and beta-prime subunits of DNA dependent RNA-polymerase"/>
    <property type="match status" value="1"/>
</dbReference>
<dbReference type="PROSITE" id="PS01166">
    <property type="entry name" value="RNA_POL_BETA"/>
    <property type="match status" value="1"/>
</dbReference>
<name>RPOB_METPP</name>
<organism>
    <name type="scientific">Methylibium petroleiphilum (strain ATCC BAA-1232 / LMG 22953 / PM1)</name>
    <dbReference type="NCBI Taxonomy" id="420662"/>
    <lineage>
        <taxon>Bacteria</taxon>
        <taxon>Pseudomonadati</taxon>
        <taxon>Pseudomonadota</taxon>
        <taxon>Betaproteobacteria</taxon>
        <taxon>Burkholderiales</taxon>
        <taxon>Sphaerotilaceae</taxon>
        <taxon>Methylibium</taxon>
    </lineage>
</organism>
<proteinExistence type="inferred from homology"/>